<protein>
    <recommendedName>
        <fullName evidence="1">UPF0180 protein GK1051</fullName>
    </recommendedName>
</protein>
<organism>
    <name type="scientific">Geobacillus kaustophilus (strain HTA426)</name>
    <dbReference type="NCBI Taxonomy" id="235909"/>
    <lineage>
        <taxon>Bacteria</taxon>
        <taxon>Bacillati</taxon>
        <taxon>Bacillota</taxon>
        <taxon>Bacilli</taxon>
        <taxon>Bacillales</taxon>
        <taxon>Anoxybacillaceae</taxon>
        <taxon>Geobacillus</taxon>
        <taxon>Geobacillus thermoleovorans group</taxon>
    </lineage>
</organism>
<feature type="chain" id="PRO_0000172744" description="UPF0180 protein GK1051">
    <location>
        <begin position="1"/>
        <end position="80"/>
    </location>
</feature>
<reference key="1">
    <citation type="journal article" date="2004" name="Nucleic Acids Res.">
        <title>Thermoadaptation trait revealed by the genome sequence of thermophilic Geobacillus kaustophilus.</title>
        <authorList>
            <person name="Takami H."/>
            <person name="Takaki Y."/>
            <person name="Chee G.-J."/>
            <person name="Nishi S."/>
            <person name="Shimamura S."/>
            <person name="Suzuki H."/>
            <person name="Matsui S."/>
            <person name="Uchiyama I."/>
        </authorList>
    </citation>
    <scope>NUCLEOTIDE SEQUENCE [LARGE SCALE GENOMIC DNA]</scope>
    <source>
        <strain>HTA426</strain>
    </source>
</reference>
<comment type="similarity">
    <text evidence="1">Belongs to the UPF0180 family.</text>
</comment>
<proteinExistence type="inferred from homology"/>
<gene>
    <name type="ordered locus">GK1051</name>
</gene>
<sequence>MAKIGVEPSLTDVQEALKERGYDVVPLRGEQDARGCDCCVITGLDANIAGIHNIVTSGPVIEASGLTAEEICQKVEEKLR</sequence>
<accession>Q5L144</accession>
<name>Y1051_GEOKA</name>
<evidence type="ECO:0000255" key="1">
    <source>
        <dbReference type="HAMAP-Rule" id="MF_00506"/>
    </source>
</evidence>
<dbReference type="EMBL" id="BA000043">
    <property type="protein sequence ID" value="BAD75336.1"/>
    <property type="molecule type" value="Genomic_DNA"/>
</dbReference>
<dbReference type="RefSeq" id="WP_011230551.1">
    <property type="nucleotide sequence ID" value="NC_006510.1"/>
</dbReference>
<dbReference type="STRING" id="235909.GK1051"/>
<dbReference type="KEGG" id="gka:GK1051"/>
<dbReference type="eggNOG" id="ENOG503307C">
    <property type="taxonomic scope" value="Bacteria"/>
</dbReference>
<dbReference type="HOGENOM" id="CLU_187365_0_0_9"/>
<dbReference type="Proteomes" id="UP000001172">
    <property type="component" value="Chromosome"/>
</dbReference>
<dbReference type="HAMAP" id="MF_00506">
    <property type="entry name" value="UPF0180"/>
    <property type="match status" value="1"/>
</dbReference>
<dbReference type="InterPro" id="IPR005370">
    <property type="entry name" value="UPF0180"/>
</dbReference>
<dbReference type="NCBIfam" id="NF002845">
    <property type="entry name" value="PRK03094.1"/>
    <property type="match status" value="1"/>
</dbReference>
<dbReference type="Pfam" id="PF03698">
    <property type="entry name" value="UPF0180"/>
    <property type="match status" value="1"/>
</dbReference>
<keyword id="KW-1185">Reference proteome</keyword>